<name>VAPB_MYCS2</name>
<accession>A0QRY5</accession>
<organism>
    <name type="scientific">Mycolicibacterium smegmatis (strain ATCC 700084 / mc(2)155)</name>
    <name type="common">Mycobacterium smegmatis</name>
    <dbReference type="NCBI Taxonomy" id="246196"/>
    <lineage>
        <taxon>Bacteria</taxon>
        <taxon>Bacillati</taxon>
        <taxon>Actinomycetota</taxon>
        <taxon>Actinomycetes</taxon>
        <taxon>Mycobacteriales</taxon>
        <taxon>Mycobacteriaceae</taxon>
        <taxon>Mycolicibacterium</taxon>
    </lineage>
</organism>
<sequence length="84" mass="9280">MALSIKHPEADRLARELAARTGETLTEAVVMALRERLARTVGRTQVVPLREELAAIRRRCAALPVLDDRTAESILGYDDRGLPS</sequence>
<reference key="1">
    <citation type="submission" date="2006-10" db="EMBL/GenBank/DDBJ databases">
        <authorList>
            <person name="Fleischmann R.D."/>
            <person name="Dodson R.J."/>
            <person name="Haft D.H."/>
            <person name="Merkel J.S."/>
            <person name="Nelson W.C."/>
            <person name="Fraser C.M."/>
        </authorList>
    </citation>
    <scope>NUCLEOTIDE SEQUENCE [LARGE SCALE GENOMIC DNA]</scope>
    <source>
        <strain>ATCC 700084 / mc(2)155</strain>
    </source>
</reference>
<reference key="2">
    <citation type="journal article" date="2007" name="Genome Biol.">
        <title>Interrupted coding sequences in Mycobacterium smegmatis: authentic mutations or sequencing errors?</title>
        <authorList>
            <person name="Deshayes C."/>
            <person name="Perrodou E."/>
            <person name="Gallien S."/>
            <person name="Euphrasie D."/>
            <person name="Schaeffer C."/>
            <person name="Van-Dorsselaer A."/>
            <person name="Poch O."/>
            <person name="Lecompte O."/>
            <person name="Reyrat J.-M."/>
        </authorList>
    </citation>
    <scope>NUCLEOTIDE SEQUENCE [LARGE SCALE GENOMIC DNA]</scope>
    <source>
        <strain>ATCC 700084 / mc(2)155</strain>
    </source>
</reference>
<reference key="3">
    <citation type="journal article" date="2009" name="Genome Res.">
        <title>Ortho-proteogenomics: multiple proteomes investigation through orthology and a new MS-based protocol.</title>
        <authorList>
            <person name="Gallien S."/>
            <person name="Perrodou E."/>
            <person name="Carapito C."/>
            <person name="Deshayes C."/>
            <person name="Reyrat J.-M."/>
            <person name="Van Dorsselaer A."/>
            <person name="Poch O."/>
            <person name="Schaeffer C."/>
            <person name="Lecompte O."/>
        </authorList>
    </citation>
    <scope>NUCLEOTIDE SEQUENCE [LARGE SCALE GENOMIC DNA]</scope>
    <source>
        <strain>ATCC 700084 / mc(2)155</strain>
    </source>
</reference>
<reference key="4">
    <citation type="journal article" date="2009" name="J. Mol. Biol.">
        <title>The vapBC operon from Mycobacterium smegmatis is an autoregulated toxin-antitoxin module that controls growth via inhibition of translation.</title>
        <authorList>
            <person name="Robson J."/>
            <person name="McKenzie J.L."/>
            <person name="Cursons R."/>
            <person name="Cook G.M."/>
            <person name="Arcus V.L."/>
        </authorList>
    </citation>
    <scope>FUNCTION AS A ANTITOXIN</scope>
    <scope>FUNCTION IN TRANSCRIPTION REGULATION</scope>
    <scope>SUBUNIT</scope>
    <scope>INDUCTION</scope>
    <scope>DNA-BINDING</scope>
    <scope>DISRUPTION PHENOTYPE</scope>
    <source>
        <strain>ATCC 700084 / mc(2)155</strain>
    </source>
</reference>
<reference key="5">
    <citation type="journal article" date="2012" name="J. Bacteriol.">
        <title>A VapBC toxin-antitoxin module is a posttranscriptional regulator of metabolic flux in mycobacteria.</title>
        <authorList>
            <person name="McKenzie J.L."/>
            <person name="Robson J."/>
            <person name="Berney M."/>
            <person name="Smith T.C."/>
            <person name="Ruthe A."/>
            <person name="Gardner P.P."/>
            <person name="Arcus V.L."/>
            <person name="Cook G.M."/>
        </authorList>
    </citation>
    <scope>FUNCTION AS AN ANTITOXIN</scope>
    <scope>SUBUNIT</scope>
    <scope>DISRUPTION PHENOTYPE</scope>
    <source>
        <strain>ATCC 700084 / mc(2)155</strain>
    </source>
</reference>
<reference key="6">
    <citation type="journal article" date="2012" name="J. Biol. Chem.">
        <title>Toxin-antitoxin systems of Mycobacterium smegmatis are essential for cell survival.</title>
        <authorList>
            <person name="Frampton R."/>
            <person name="Aggio R.B."/>
            <person name="Villas-Boas S.G."/>
            <person name="Arcus V.L."/>
            <person name="Cook G.M."/>
        </authorList>
    </citation>
    <scope>DISRUPTION PHENOTYPE</scope>
    <source>
        <strain>ATCC 700084 / mc(2)155</strain>
    </source>
</reference>
<reference key="7">
    <citation type="journal article" date="2014" name="FEMS Microbiol. Lett.">
        <title>Toxin-antitoxin vapBC locus participates in formation of the dormant state in Mycobacterium smegmatis.</title>
        <authorList>
            <person name="Demidenok O.I."/>
            <person name="Kaprelyants A.S."/>
            <person name="Goncharenko A.V."/>
        </authorList>
    </citation>
    <scope>FUNCTION</scope>
    <scope>DISRUPTION PHENOTYPE</scope>
    <source>
        <strain>ATCC 700084 / mc(2)155</strain>
    </source>
</reference>
<comment type="function">
    <text evidence="1 3 4">Antitoxin component of a type II toxin-antitoxin (TA) system. Upon overexpression neutralizes the effect of overexpressed cognate toxin VapC. Overexpression alone prevents cells from entering a nonculturable dormant state, probably as it binds endogenous VapC (PubMed:24417293). The TA system acts as a post-transcriptional regulator of carbon metabolism; in M.smegmatis 3 TA systems (VapB-VapC, MazE-MazF and Phd-Doc) may be involved in monitoring the nutritional supply and physiological state of the cell, linking catabolic with anabolic reactions. Translation of vapC mRNA requires VapB.</text>
</comment>
<comment type="subunit">
    <text evidence="1 3">Forms a complex with cognate toxin VapC.</text>
</comment>
<comment type="induction">
    <text evidence="1">Expression is low but constitutive, and repressed by VapB-VapC. Member of the vapB-vapC operon.</text>
</comment>
<comment type="disruption phenotype">
    <text evidence="1 2 3 4">The vapB-vapC operon is not essential; cells grow faster than wild-type on rich and minimal glycerol-containing medium. The operon deletion mutants die faster than wild-type under potassium-limiting conditions, which is prevented by overexpression of vapB (PubMed:24417293). The vapB antitoxin gene can be disrupted without causing death, however despite elevated vapC transcription, no VapC protein could be detected, suggesting that RNA processing and translational coupling are important in VapC expression. A triple TA mutant (missing vapB-vapC, mazE-mazF and phd-doc TA systems) survives antibiotic challenge, suggesting the TA systems are not required to generate drug-resistant cells. However the triple mutant is more sensitive to oxidative and heat stress, and does not survive long term starvation during aerobic growth on complex medium. There is a difference in the level of branched-chain amino acids, which may play a role in monitoring the nutritional supply and physiological state of the cell.</text>
</comment>
<feature type="chain" id="PRO_0000420849" description="Antitoxin VapB">
    <location>
        <begin position="1"/>
        <end position="84"/>
    </location>
</feature>
<gene>
    <name type="primary">vapB</name>
    <name type="ordered locus">MSMEG_1283</name>
    <name type="ordered locus">MSMEI_1245</name>
</gene>
<dbReference type="EMBL" id="CP000480">
    <property type="protein sequence ID" value="ABK71133.1"/>
    <property type="molecule type" value="Genomic_DNA"/>
</dbReference>
<dbReference type="EMBL" id="CP001663">
    <property type="protein sequence ID" value="AFP37721.1"/>
    <property type="molecule type" value="Genomic_DNA"/>
</dbReference>
<dbReference type="RefSeq" id="WP_003892665.1">
    <property type="nucleotide sequence ID" value="NZ_SIJM01000042.1"/>
</dbReference>
<dbReference type="RefSeq" id="YP_885673.1">
    <property type="nucleotide sequence ID" value="NC_008596.1"/>
</dbReference>
<dbReference type="SMR" id="A0QRY5"/>
<dbReference type="STRING" id="246196.MSMEG_1283"/>
<dbReference type="PaxDb" id="246196-MSMEI_1245"/>
<dbReference type="KEGG" id="msb:LJ00_06390"/>
<dbReference type="KEGG" id="msg:MSMEI_1245"/>
<dbReference type="KEGG" id="msm:MSMEG_1283"/>
<dbReference type="PATRIC" id="fig|246196.19.peg.1272"/>
<dbReference type="eggNOG" id="COG4423">
    <property type="taxonomic scope" value="Bacteria"/>
</dbReference>
<dbReference type="OrthoDB" id="495439at2"/>
<dbReference type="Proteomes" id="UP000000757">
    <property type="component" value="Chromosome"/>
</dbReference>
<dbReference type="Proteomes" id="UP000006158">
    <property type="component" value="Chromosome"/>
</dbReference>
<dbReference type="GO" id="GO:0003677">
    <property type="term" value="F:DNA binding"/>
    <property type="evidence" value="ECO:0007669"/>
    <property type="project" value="UniProtKB-KW"/>
</dbReference>
<dbReference type="InterPro" id="IPR011660">
    <property type="entry name" value="VapB-like"/>
</dbReference>
<dbReference type="Pfam" id="PF07704">
    <property type="entry name" value="PSK_trans_fac"/>
    <property type="match status" value="1"/>
</dbReference>
<keyword id="KW-0238">DNA-binding</keyword>
<keyword id="KW-1185">Reference proteome</keyword>
<keyword id="KW-0678">Repressor</keyword>
<keyword id="KW-1277">Toxin-antitoxin system</keyword>
<keyword id="KW-0804">Transcription</keyword>
<keyword id="KW-0805">Transcription regulation</keyword>
<protein>
    <recommendedName>
        <fullName>Antitoxin VapB</fullName>
    </recommendedName>
</protein>
<evidence type="ECO:0000269" key="1">
    <source>
    </source>
</evidence>
<evidence type="ECO:0000269" key="2">
    <source>
    </source>
</evidence>
<evidence type="ECO:0000269" key="3">
    <source>
    </source>
</evidence>
<evidence type="ECO:0000269" key="4">
    <source>
    </source>
</evidence>
<proteinExistence type="evidence at protein level"/>